<keyword id="KW-0687">Ribonucleoprotein</keyword>
<keyword id="KW-0689">Ribosomal protein</keyword>
<comment type="similarity">
    <text evidence="1">Belongs to the universal ribosomal protein uL29 family.</text>
</comment>
<protein>
    <recommendedName>
        <fullName evidence="1">Large ribosomal subunit protein uL29</fullName>
    </recommendedName>
    <alternativeName>
        <fullName evidence="2">50S ribosomal protein L29</fullName>
    </alternativeName>
</protein>
<gene>
    <name evidence="1" type="primary">rpmC</name>
    <name type="ordered locus">RC0998</name>
</gene>
<feature type="chain" id="PRO_0000130444" description="Large ribosomal subunit protein uL29">
    <location>
        <begin position="1"/>
        <end position="71"/>
    </location>
</feature>
<sequence length="71" mass="8376">MNDLKLLRSKLSTETIEELYKNLNLLKKELFNLRFQQALGDLKNTSRFSLVKKSIARIKTELTKRANSEEY</sequence>
<accession>Q92GX4</accession>
<dbReference type="EMBL" id="AE006914">
    <property type="protein sequence ID" value="AAL03536.1"/>
    <property type="molecule type" value="Genomic_DNA"/>
</dbReference>
<dbReference type="PIR" id="F97824">
    <property type="entry name" value="F97824"/>
</dbReference>
<dbReference type="RefSeq" id="WP_004997809.1">
    <property type="nucleotide sequence ID" value="NC_003103.1"/>
</dbReference>
<dbReference type="SMR" id="Q92GX4"/>
<dbReference type="GeneID" id="95361478"/>
<dbReference type="KEGG" id="rco:RC0998"/>
<dbReference type="HOGENOM" id="CLU_158491_1_0_5"/>
<dbReference type="Proteomes" id="UP000000816">
    <property type="component" value="Chromosome"/>
</dbReference>
<dbReference type="GO" id="GO:0022625">
    <property type="term" value="C:cytosolic large ribosomal subunit"/>
    <property type="evidence" value="ECO:0007669"/>
    <property type="project" value="TreeGrafter"/>
</dbReference>
<dbReference type="GO" id="GO:0003735">
    <property type="term" value="F:structural constituent of ribosome"/>
    <property type="evidence" value="ECO:0007669"/>
    <property type="project" value="InterPro"/>
</dbReference>
<dbReference type="GO" id="GO:0006412">
    <property type="term" value="P:translation"/>
    <property type="evidence" value="ECO:0007669"/>
    <property type="project" value="UniProtKB-UniRule"/>
</dbReference>
<dbReference type="CDD" id="cd00427">
    <property type="entry name" value="Ribosomal_L29_HIP"/>
    <property type="match status" value="1"/>
</dbReference>
<dbReference type="FunFam" id="1.10.287.310:FF:000001">
    <property type="entry name" value="50S ribosomal protein L29"/>
    <property type="match status" value="1"/>
</dbReference>
<dbReference type="Gene3D" id="1.10.287.310">
    <property type="match status" value="1"/>
</dbReference>
<dbReference type="HAMAP" id="MF_00374">
    <property type="entry name" value="Ribosomal_uL29"/>
    <property type="match status" value="1"/>
</dbReference>
<dbReference type="InterPro" id="IPR050063">
    <property type="entry name" value="Ribosomal_protein_uL29"/>
</dbReference>
<dbReference type="InterPro" id="IPR001854">
    <property type="entry name" value="Ribosomal_uL29"/>
</dbReference>
<dbReference type="InterPro" id="IPR018254">
    <property type="entry name" value="Ribosomal_uL29_CS"/>
</dbReference>
<dbReference type="InterPro" id="IPR036049">
    <property type="entry name" value="Ribosomal_uL29_sf"/>
</dbReference>
<dbReference type="NCBIfam" id="TIGR00012">
    <property type="entry name" value="L29"/>
    <property type="match status" value="1"/>
</dbReference>
<dbReference type="PANTHER" id="PTHR10916">
    <property type="entry name" value="60S RIBOSOMAL PROTEIN L35/50S RIBOSOMAL PROTEIN L29"/>
    <property type="match status" value="1"/>
</dbReference>
<dbReference type="PANTHER" id="PTHR10916:SF0">
    <property type="entry name" value="LARGE RIBOSOMAL SUBUNIT PROTEIN UL29C"/>
    <property type="match status" value="1"/>
</dbReference>
<dbReference type="Pfam" id="PF00831">
    <property type="entry name" value="Ribosomal_L29"/>
    <property type="match status" value="1"/>
</dbReference>
<dbReference type="SUPFAM" id="SSF46561">
    <property type="entry name" value="Ribosomal protein L29 (L29p)"/>
    <property type="match status" value="1"/>
</dbReference>
<dbReference type="PROSITE" id="PS00579">
    <property type="entry name" value="RIBOSOMAL_L29"/>
    <property type="match status" value="1"/>
</dbReference>
<proteinExistence type="inferred from homology"/>
<name>RL29_RICCN</name>
<organism>
    <name type="scientific">Rickettsia conorii (strain ATCC VR-613 / Malish 7)</name>
    <dbReference type="NCBI Taxonomy" id="272944"/>
    <lineage>
        <taxon>Bacteria</taxon>
        <taxon>Pseudomonadati</taxon>
        <taxon>Pseudomonadota</taxon>
        <taxon>Alphaproteobacteria</taxon>
        <taxon>Rickettsiales</taxon>
        <taxon>Rickettsiaceae</taxon>
        <taxon>Rickettsieae</taxon>
        <taxon>Rickettsia</taxon>
        <taxon>spotted fever group</taxon>
    </lineage>
</organism>
<reference key="1">
    <citation type="journal article" date="2001" name="Science">
        <title>Mechanisms of evolution in Rickettsia conorii and R. prowazekii.</title>
        <authorList>
            <person name="Ogata H."/>
            <person name="Audic S."/>
            <person name="Renesto-Audiffren P."/>
            <person name="Fournier P.-E."/>
            <person name="Barbe V."/>
            <person name="Samson D."/>
            <person name="Roux V."/>
            <person name="Cossart P."/>
            <person name="Weissenbach J."/>
            <person name="Claverie J.-M."/>
            <person name="Raoult D."/>
        </authorList>
    </citation>
    <scope>NUCLEOTIDE SEQUENCE [LARGE SCALE GENOMIC DNA]</scope>
    <source>
        <strain>ATCC VR-613 / Malish 7</strain>
    </source>
</reference>
<evidence type="ECO:0000255" key="1">
    <source>
        <dbReference type="HAMAP-Rule" id="MF_00374"/>
    </source>
</evidence>
<evidence type="ECO:0000305" key="2"/>